<dbReference type="SMR" id="P85894"/>
<dbReference type="Allergome" id="5904">
    <property type="allergen name" value="Mor n 3"/>
</dbReference>
<dbReference type="Allergome" id="6188">
    <property type="allergen name" value="Mor n 3.0101"/>
</dbReference>
<dbReference type="GO" id="GO:0008289">
    <property type="term" value="F:lipid binding"/>
    <property type="evidence" value="ECO:0007669"/>
    <property type="project" value="UniProtKB-KW"/>
</dbReference>
<dbReference type="GO" id="GO:0006869">
    <property type="term" value="P:lipid transport"/>
    <property type="evidence" value="ECO:0007669"/>
    <property type="project" value="InterPro"/>
</dbReference>
<dbReference type="CDD" id="cd01960">
    <property type="entry name" value="nsLTP1"/>
    <property type="match status" value="1"/>
</dbReference>
<dbReference type="FunFam" id="1.10.110.10:FF:000002">
    <property type="entry name" value="Non-specific lipid-transfer protein"/>
    <property type="match status" value="1"/>
</dbReference>
<dbReference type="Gene3D" id="1.10.110.10">
    <property type="entry name" value="Plant lipid-transfer and hydrophobic proteins"/>
    <property type="match status" value="1"/>
</dbReference>
<dbReference type="InterPro" id="IPR036312">
    <property type="entry name" value="Bifun_inhib/LTP/seed_sf"/>
</dbReference>
<dbReference type="InterPro" id="IPR016140">
    <property type="entry name" value="Bifunc_inhib/LTP/seed_store"/>
</dbReference>
<dbReference type="InterPro" id="IPR000528">
    <property type="entry name" value="Plant_nsLTP"/>
</dbReference>
<dbReference type="PANTHER" id="PTHR33076">
    <property type="entry name" value="NON-SPECIFIC LIPID-TRANSFER PROTEIN 2-RELATED"/>
    <property type="match status" value="1"/>
</dbReference>
<dbReference type="Pfam" id="PF00234">
    <property type="entry name" value="Tryp_alpha_amyl"/>
    <property type="match status" value="1"/>
</dbReference>
<dbReference type="PRINTS" id="PR00382">
    <property type="entry name" value="LIPIDTRNSFER"/>
</dbReference>
<dbReference type="SMART" id="SM00499">
    <property type="entry name" value="AAI"/>
    <property type="match status" value="1"/>
</dbReference>
<dbReference type="SUPFAM" id="SSF47699">
    <property type="entry name" value="Bifunctional inhibitor/lipid-transfer protein/seed storage 2S albumin"/>
    <property type="match status" value="1"/>
</dbReference>
<dbReference type="PROSITE" id="PS00597">
    <property type="entry name" value="PLANT_LTP"/>
    <property type="match status" value="1"/>
</dbReference>
<reference evidence="5" key="1">
    <citation type="journal article" date="2010" name="Allergy">
        <title>Biochemical, immunological and clinical characterization of a cross-reactive nonspecific lipid transfer protein 1 from mulberry.</title>
        <authorList>
            <person name="Ciardiello M.A."/>
            <person name="Palazzo P."/>
            <person name="Bernardi M.L."/>
            <person name="Carratore V."/>
            <person name="Giangrieco I."/>
            <person name="Longo V."/>
            <person name="Melis M."/>
            <person name="Tamburrini M."/>
            <person name="Zennaro D."/>
            <person name="Mari A."/>
            <person name="Colombo P."/>
        </authorList>
    </citation>
    <scope>PROTEIN SEQUENCE</scope>
    <scope>MASS SPECTROMETRY</scope>
    <scope>ALLERGEN</scope>
    <source>
        <tissue evidence="3">Fruit</tissue>
    </source>
</reference>
<protein>
    <recommendedName>
        <fullName evidence="4">Non-specific lipid-transfer protein 1</fullName>
        <shortName evidence="4">LTP 1</shortName>
    </recommendedName>
    <allergenName evidence="4">Mor n 3</allergenName>
</protein>
<name>LTP1_MORNI</name>
<accession>P85894</accession>
<proteinExistence type="evidence at protein level"/>
<keyword id="KW-0020">Allergen</keyword>
<keyword id="KW-0903">Direct protein sequencing</keyword>
<keyword id="KW-1015">Disulfide bond</keyword>
<keyword id="KW-0446">Lipid-binding</keyword>
<keyword id="KW-0813">Transport</keyword>
<evidence type="ECO:0000250" key="1">
    <source>
        <dbReference type="UniProtKB" id="P81402"/>
    </source>
</evidence>
<evidence type="ECO:0000255" key="2"/>
<evidence type="ECO:0000269" key="3">
    <source>
    </source>
</evidence>
<evidence type="ECO:0000303" key="4">
    <source>
    </source>
</evidence>
<evidence type="ECO:0000305" key="5"/>
<feature type="chain" id="PRO_0000391420" description="Non-specific lipid-transfer protein 1">
    <location>
        <begin position="1"/>
        <end position="91"/>
    </location>
</feature>
<feature type="disulfide bond" evidence="1">
    <location>
        <begin position="3"/>
        <end position="50"/>
    </location>
</feature>
<feature type="disulfide bond" evidence="1">
    <location>
        <begin position="13"/>
        <end position="27"/>
    </location>
</feature>
<feature type="disulfide bond" evidence="1">
    <location>
        <begin position="28"/>
        <end position="73"/>
    </location>
</feature>
<feature type="disulfide bond" evidence="1">
    <location>
        <begin position="48"/>
        <end position="87"/>
    </location>
</feature>
<organism>
    <name type="scientific">Morus nigra</name>
    <name type="common">Black mulberry</name>
    <dbReference type="NCBI Taxonomy" id="85232"/>
    <lineage>
        <taxon>Eukaryota</taxon>
        <taxon>Viridiplantae</taxon>
        <taxon>Streptophyta</taxon>
        <taxon>Embryophyta</taxon>
        <taxon>Tracheophyta</taxon>
        <taxon>Spermatophyta</taxon>
        <taxon>Magnoliopsida</taxon>
        <taxon>eudicotyledons</taxon>
        <taxon>Gunneridae</taxon>
        <taxon>Pentapetalae</taxon>
        <taxon>rosids</taxon>
        <taxon>fabids</taxon>
        <taxon>Rosales</taxon>
        <taxon>Moraceae</taxon>
        <taxon>Moreae</taxon>
        <taxon>Morus</taxon>
    </lineage>
</organism>
<comment type="function">
    <text evidence="1">Plant non-specific lipid-transfer proteins transfer phospholipids as well as galactolipids across membranes. May play a role in wax or cutin deposition in the cell walls of expanding epidermal cells and certain secretory tissues (By similarity).</text>
</comment>
<comment type="mass spectrometry"/>
<comment type="allergen">
    <text evidence="3">Causes an allergic reaction in human. Binds to IgE.</text>
</comment>
<comment type="similarity">
    <text evidence="2">Belongs to the plant LTP family.</text>
</comment>
<sequence>ITCGQVSSSLAPCINYLRAGGVVPANCCNGVRSLNNAAKTTADRQAACNCLKSAFNSIKGLNLNLAAGLPGKCGVSVPYKISPSTDCKSVK</sequence>